<organism>
    <name type="scientific">Macaca mulatta</name>
    <name type="common">Rhesus macaque</name>
    <dbReference type="NCBI Taxonomy" id="9544"/>
    <lineage>
        <taxon>Eukaryota</taxon>
        <taxon>Metazoa</taxon>
        <taxon>Chordata</taxon>
        <taxon>Craniata</taxon>
        <taxon>Vertebrata</taxon>
        <taxon>Euteleostomi</taxon>
        <taxon>Mammalia</taxon>
        <taxon>Eutheria</taxon>
        <taxon>Euarchontoglires</taxon>
        <taxon>Primates</taxon>
        <taxon>Haplorrhini</taxon>
        <taxon>Catarrhini</taxon>
        <taxon>Cercopithecidae</taxon>
        <taxon>Cercopithecinae</taxon>
        <taxon>Macaca</taxon>
    </lineage>
</organism>
<protein>
    <recommendedName>
        <fullName evidence="4">Alpha-tubulin N-acetyltransferase 1</fullName>
        <shortName evidence="4">Alpha-TAT</shortName>
        <shortName evidence="4">Alpha-TAT1</shortName>
        <shortName evidence="4">TAT</shortName>
        <ecNumber evidence="4">2.3.1.108</ecNumber>
    </recommendedName>
    <alternativeName>
        <fullName evidence="4">Acetyltransferase mec-17 homolog</fullName>
    </alternativeName>
</protein>
<feature type="chain" id="PRO_0000402065" description="Alpha-tubulin N-acetyltransferase 1">
    <location>
        <begin position="1"/>
        <end position="323"/>
    </location>
</feature>
<feature type="domain" description="N-acetyltransferase" evidence="4">
    <location>
        <begin position="1"/>
        <end position="190"/>
    </location>
</feature>
<feature type="region of interest" description="Disordered" evidence="5">
    <location>
        <begin position="196"/>
        <end position="239"/>
    </location>
</feature>
<feature type="region of interest" description="Disordered" evidence="5">
    <location>
        <begin position="252"/>
        <end position="287"/>
    </location>
</feature>
<feature type="compositionally biased region" description="Low complexity" evidence="5">
    <location>
        <begin position="209"/>
        <end position="220"/>
    </location>
</feature>
<feature type="compositionally biased region" description="Basic and acidic residues" evidence="5">
    <location>
        <begin position="226"/>
        <end position="239"/>
    </location>
</feature>
<feature type="binding site" evidence="4">
    <location>
        <begin position="124"/>
        <end position="137"/>
    </location>
    <ligand>
        <name>acetyl-CoA</name>
        <dbReference type="ChEBI" id="CHEBI:57288"/>
    </ligand>
</feature>
<feature type="binding site" evidence="4">
    <location>
        <begin position="160"/>
        <end position="169"/>
    </location>
    <ligand>
        <name>acetyl-CoA</name>
        <dbReference type="ChEBI" id="CHEBI:57288"/>
    </ligand>
</feature>
<feature type="site" description="Crucial for catalytic activity" evidence="4">
    <location>
        <position position="58"/>
    </location>
</feature>
<feature type="modified residue" description="N6-acetyllysine; by autocatalysis" evidence="3 4">
    <location>
        <position position="56"/>
    </location>
</feature>
<feature type="modified residue" description="N6-acetyllysine; by autocatalysis" evidence="3 4">
    <location>
        <position position="146"/>
    </location>
</feature>
<feature type="modified residue" description="N6-acetyllysine; by autocatalysis" evidence="3 4">
    <location>
        <position position="233"/>
    </location>
</feature>
<feature type="modified residue" description="N6-acetyllysine; by autocatalysis" evidence="3 4">
    <location>
        <position position="244"/>
    </location>
</feature>
<feature type="modified residue" description="Phosphoserine" evidence="2">
    <location>
        <position position="272"/>
    </location>
</feature>
<feature type="modified residue" description="Phosphoserine" evidence="1">
    <location>
        <position position="276"/>
    </location>
</feature>
<feature type="modified residue" description="Asymmetric dimethylarginine" evidence="3">
    <location>
        <position position="305"/>
    </location>
</feature>
<feature type="modified residue" description="Phosphoserine" evidence="1">
    <location>
        <position position="315"/>
    </location>
</feature>
<feature type="modified residue" description="Omega-N-methylarginine" evidence="1">
    <location>
        <position position="323"/>
    </location>
</feature>
<gene>
    <name evidence="4" type="primary">ATAT1</name>
    <name evidence="4" type="synonym">MEC17</name>
</gene>
<sequence>MEFPFDVDALFPERITVLDQHLRPPARRPGTTTPARVDLQQQIMTIIDELGKASAKAQNLSAPITSASRMQSNRHVVYILKDSSGRPAGKGAIIGFIKVGYKKLFVLDDREAHNEVEPLCILDFYIHESVQRHGHGRELFQYMLQKERVEPHQLAIDRPSQKLLKFLNKHYNLETTVPQVNNFVIFEGFFAHQHRPPAPSLRATRHSRAAAVDPTPTAPARKLPPKRAEGDIKPYSSSDREFLKVAVEPPWPLNRAPRRATPPAHPPPRSSSLGNSPERGPLRPFVPEQELLRSLRLCPPHPTARLLLAADPGGSPAQRRRTR</sequence>
<evidence type="ECO:0000250" key="1">
    <source>
        <dbReference type="UniProtKB" id="Q5SQI0"/>
    </source>
</evidence>
<evidence type="ECO:0000250" key="2">
    <source>
        <dbReference type="UniProtKB" id="Q6MG11"/>
    </source>
</evidence>
<evidence type="ECO:0000250" key="3">
    <source>
        <dbReference type="UniProtKB" id="Q8K341"/>
    </source>
</evidence>
<evidence type="ECO:0000255" key="4">
    <source>
        <dbReference type="HAMAP-Rule" id="MF_03130"/>
    </source>
</evidence>
<evidence type="ECO:0000256" key="5">
    <source>
        <dbReference type="SAM" id="MobiDB-lite"/>
    </source>
</evidence>
<reference key="1">
    <citation type="journal article" date="2004" name="Mol. Biol. Evol.">
        <title>Rhesus macaque class I duplicon structures, organization, and evolution within the alpha block of the major histocompatibility complex.</title>
        <authorList>
            <person name="Kulski J.K."/>
            <person name="Anzai T."/>
            <person name="Shiina T."/>
            <person name="Inoko H."/>
        </authorList>
    </citation>
    <scope>NUCLEOTIDE SEQUENCE [LARGE SCALE GENOMIC DNA]</scope>
</reference>
<proteinExistence type="inferred from homology"/>
<dbReference type="EC" id="2.3.1.108" evidence="4"/>
<dbReference type="EMBL" id="AB128049">
    <property type="protein sequence ID" value="BAD69763.1"/>
    <property type="molecule type" value="Genomic_DNA"/>
</dbReference>
<dbReference type="RefSeq" id="NP_001108432.1">
    <property type="nucleotide sequence ID" value="NM_001114960.1"/>
</dbReference>
<dbReference type="SMR" id="Q5TM63"/>
<dbReference type="FunCoup" id="Q5TM63">
    <property type="interactions" value="488"/>
</dbReference>
<dbReference type="GeneID" id="100141388"/>
<dbReference type="KEGG" id="mcc:100141388"/>
<dbReference type="CTD" id="79969"/>
<dbReference type="InParanoid" id="Q5TM63"/>
<dbReference type="OrthoDB" id="447510at2759"/>
<dbReference type="Proteomes" id="UP000006718">
    <property type="component" value="Unassembled WGS sequence"/>
</dbReference>
<dbReference type="GO" id="GO:0030424">
    <property type="term" value="C:axon"/>
    <property type="evidence" value="ECO:0007669"/>
    <property type="project" value="UniProtKB-SubCell"/>
</dbReference>
<dbReference type="GO" id="GO:0005905">
    <property type="term" value="C:clathrin-coated pit"/>
    <property type="evidence" value="ECO:0007669"/>
    <property type="project" value="UniProtKB-SubCell"/>
</dbReference>
<dbReference type="GO" id="GO:0005737">
    <property type="term" value="C:cytoplasm"/>
    <property type="evidence" value="ECO:0007669"/>
    <property type="project" value="UniProtKB-SubCell"/>
</dbReference>
<dbReference type="GO" id="GO:0005925">
    <property type="term" value="C:focal adhesion"/>
    <property type="evidence" value="ECO:0007669"/>
    <property type="project" value="UniProtKB-SubCell"/>
</dbReference>
<dbReference type="GO" id="GO:0005874">
    <property type="term" value="C:microtubule"/>
    <property type="evidence" value="ECO:0007669"/>
    <property type="project" value="InterPro"/>
</dbReference>
<dbReference type="GO" id="GO:0005819">
    <property type="term" value="C:spindle"/>
    <property type="evidence" value="ECO:0007669"/>
    <property type="project" value="UniProtKB-SubCell"/>
</dbReference>
<dbReference type="GO" id="GO:0004468">
    <property type="term" value="F:L-lysine N-acetyltransferase activity, acting on acetyl phosphate as donor"/>
    <property type="evidence" value="ECO:0000250"/>
    <property type="project" value="UniProtKB"/>
</dbReference>
<dbReference type="GO" id="GO:0019799">
    <property type="term" value="F:tubulin N-acetyltransferase activity"/>
    <property type="evidence" value="ECO:0000250"/>
    <property type="project" value="UniProtKB"/>
</dbReference>
<dbReference type="GO" id="GO:0071929">
    <property type="term" value="P:alpha-tubulin acetylation"/>
    <property type="evidence" value="ECO:0000250"/>
    <property type="project" value="UniProtKB"/>
</dbReference>
<dbReference type="GO" id="GO:0000226">
    <property type="term" value="P:microtubule cytoskeleton organization"/>
    <property type="evidence" value="ECO:0000318"/>
    <property type="project" value="GO_Central"/>
</dbReference>
<dbReference type="GO" id="GO:0048666">
    <property type="term" value="P:neuron development"/>
    <property type="evidence" value="ECO:0007669"/>
    <property type="project" value="UniProtKB-UniRule"/>
</dbReference>
<dbReference type="GO" id="GO:0070507">
    <property type="term" value="P:regulation of microtubule cytoskeleton organization"/>
    <property type="evidence" value="ECO:0007669"/>
    <property type="project" value="UniProtKB-UniRule"/>
</dbReference>
<dbReference type="CDD" id="cd04301">
    <property type="entry name" value="NAT_SF"/>
    <property type="match status" value="1"/>
</dbReference>
<dbReference type="FunFam" id="3.40.630.30:FF:000060">
    <property type="entry name" value="Alpha-tubulin N-acetyltransferase 1"/>
    <property type="match status" value="1"/>
</dbReference>
<dbReference type="Gene3D" id="3.40.630.30">
    <property type="match status" value="1"/>
</dbReference>
<dbReference type="Gene3D" id="6.20.370.120">
    <property type="match status" value="1"/>
</dbReference>
<dbReference type="HAMAP" id="MF_03130">
    <property type="entry name" value="mec17"/>
    <property type="match status" value="1"/>
</dbReference>
<dbReference type="InterPro" id="IPR016181">
    <property type="entry name" value="Acyl_CoA_acyltransferase"/>
</dbReference>
<dbReference type="InterPro" id="IPR038746">
    <property type="entry name" value="Atat"/>
</dbReference>
<dbReference type="InterPro" id="IPR007965">
    <property type="entry name" value="GNAT_ATAT"/>
</dbReference>
<dbReference type="PANTHER" id="PTHR12327">
    <property type="entry name" value="ALPHA-TUBULIN N-ACETYLTRANSFERASE 1"/>
    <property type="match status" value="1"/>
</dbReference>
<dbReference type="PANTHER" id="PTHR12327:SF0">
    <property type="entry name" value="ALPHA-TUBULIN N-ACETYLTRANSFERASE 1"/>
    <property type="match status" value="1"/>
</dbReference>
<dbReference type="Pfam" id="PF05301">
    <property type="entry name" value="Acetyltransf_16"/>
    <property type="match status" value="1"/>
</dbReference>
<dbReference type="SUPFAM" id="SSF55729">
    <property type="entry name" value="Acyl-CoA N-acyltransferases (Nat)"/>
    <property type="match status" value="1"/>
</dbReference>
<dbReference type="PROSITE" id="PS51730">
    <property type="entry name" value="GNAT_ATAT"/>
    <property type="match status" value="1"/>
</dbReference>
<name>ATAT_MACMU</name>
<keyword id="KW-0007">Acetylation</keyword>
<keyword id="KW-0012">Acyltransferase</keyword>
<keyword id="KW-0965">Cell junction</keyword>
<keyword id="KW-0966">Cell projection</keyword>
<keyword id="KW-0168">Coated pit</keyword>
<keyword id="KW-0963">Cytoplasm</keyword>
<keyword id="KW-0206">Cytoskeleton</keyword>
<keyword id="KW-0472">Membrane</keyword>
<keyword id="KW-0488">Methylation</keyword>
<keyword id="KW-0597">Phosphoprotein</keyword>
<keyword id="KW-1185">Reference proteome</keyword>
<keyword id="KW-0808">Transferase</keyword>
<comment type="function">
    <text evidence="4">Specifically acetylates 'Lys-40' in alpha-tubulin on the lumenal side of microtubules. Promotes microtubule destabilization and accelerates microtubule dynamics; this activity may be independent of acetylation activity. Acetylates alpha-tubulin with a slow enzymatic rate, due to a catalytic site that is not optimized for acetyl transfer. Enters the microtubule through each end and diffuses quickly throughout the lumen of microtubules. Acetylates only long/old microtubules because of its slow acetylation rate since it does not have time to act on dynamically unstable microtubules before the enzyme is released. Required for normal sperm flagellar function. Promotes directional cell locomotion and chemotaxis, through AP2A2-dependent acetylation of alpha-tubulin at clathrin-coated pits that are concentrated at the leading edge of migrating cells. May facilitate primary cilium assembly.</text>
</comment>
<comment type="catalytic activity">
    <reaction evidence="4">
        <text>L-lysyl-[alpha-tubulin] + acetyl-CoA = N(6)-acetyl-L-lysyl-[alpha-tubulin] + CoA + H(+)</text>
        <dbReference type="Rhea" id="RHEA:15277"/>
        <dbReference type="Rhea" id="RHEA-COMP:11278"/>
        <dbReference type="Rhea" id="RHEA-COMP:11279"/>
        <dbReference type="ChEBI" id="CHEBI:15378"/>
        <dbReference type="ChEBI" id="CHEBI:29969"/>
        <dbReference type="ChEBI" id="CHEBI:57287"/>
        <dbReference type="ChEBI" id="CHEBI:57288"/>
        <dbReference type="ChEBI" id="CHEBI:61930"/>
        <dbReference type="EC" id="2.3.1.108"/>
    </reaction>
</comment>
<comment type="subunit">
    <text evidence="4">Component of the BBSome complex. Interacts with AP2 alpha-adaptins, including AP2A2, but not with AP1 gamma-adaptin (AP1G1/AP1G2); this interaction is required for efficient alpha-tubulin acetylation, hence clathrin-coated pits are sites of microtubule acetylation.</text>
</comment>
<comment type="subcellular location">
    <subcellularLocation>
        <location evidence="4">Cytoplasm</location>
    </subcellularLocation>
    <subcellularLocation>
        <location evidence="4">Membrane</location>
        <location evidence="4">Clathrin-coated pit</location>
    </subcellularLocation>
    <subcellularLocation>
        <location evidence="4">Cell junction</location>
        <location evidence="4">Focal adhesion</location>
    </subcellularLocation>
    <subcellularLocation>
        <location evidence="4">Cell projection</location>
        <location evidence="4">Axon</location>
    </subcellularLocation>
    <subcellularLocation>
        <location evidence="4">Cytoplasm</location>
        <location evidence="4">Cytoskeleton</location>
    </subcellularLocation>
    <subcellularLocation>
        <location evidence="4">Cytoplasm</location>
        <location evidence="4">Cytoskeleton</location>
        <location evidence="4">Spindle</location>
    </subcellularLocation>
</comment>
<comment type="PTM">
    <text evidence="4">Autoacetylation strongly increases tubulin acetylation.</text>
</comment>
<comment type="similarity">
    <text evidence="4">Belongs to the acetyltransferase ATAT1 family.</text>
</comment>
<accession>Q5TM63</accession>